<organism>
    <name type="scientific">Mycobacterium tuberculosis (strain CDC 1551 / Oshkosh)</name>
    <dbReference type="NCBI Taxonomy" id="83331"/>
    <lineage>
        <taxon>Bacteria</taxon>
        <taxon>Bacillati</taxon>
        <taxon>Actinomycetota</taxon>
        <taxon>Actinomycetes</taxon>
        <taxon>Mycobacteriales</taxon>
        <taxon>Mycobacteriaceae</taxon>
        <taxon>Mycobacterium</taxon>
        <taxon>Mycobacterium tuberculosis complex</taxon>
    </lineage>
</organism>
<evidence type="ECO:0000250" key="1"/>
<evidence type="ECO:0000305" key="2"/>
<protein>
    <recommendedName>
        <fullName>8-amino-7-oxononanoate synthase 1</fullName>
        <shortName>AONS</shortName>
        <ecNumber>2.3.1.47</ecNumber>
    </recommendedName>
    <alternativeName>
        <fullName>7-keto-8-amino-pelargonic acid synthase</fullName>
        <shortName>7-KAP synthase</shortName>
        <shortName>KAPA synthase</shortName>
    </alternativeName>
    <alternativeName>
        <fullName>8-amino-7-ketopelargonate synthase</fullName>
    </alternativeName>
</protein>
<name>BIOF1_MYCTO</name>
<dbReference type="EC" id="2.3.1.47"/>
<dbReference type="EMBL" id="AE000516">
    <property type="protein sequence ID" value="AAK45887.1"/>
    <property type="molecule type" value="Genomic_DNA"/>
</dbReference>
<dbReference type="PIR" id="C70540">
    <property type="entry name" value="C70540"/>
</dbReference>
<dbReference type="RefSeq" id="WP_003407805.1">
    <property type="nucleotide sequence ID" value="NZ_KK341227.1"/>
</dbReference>
<dbReference type="SMR" id="P9WQ86"/>
<dbReference type="KEGG" id="mtc:MT1620"/>
<dbReference type="PATRIC" id="fig|83331.31.peg.1742"/>
<dbReference type="HOGENOM" id="CLU_015846_11_2_11"/>
<dbReference type="UniPathway" id="UPA00078"/>
<dbReference type="Proteomes" id="UP000001020">
    <property type="component" value="Chromosome"/>
</dbReference>
<dbReference type="GO" id="GO:0008710">
    <property type="term" value="F:8-amino-7-oxononanoate synthase activity"/>
    <property type="evidence" value="ECO:0007669"/>
    <property type="project" value="UniProtKB-EC"/>
</dbReference>
<dbReference type="GO" id="GO:0030170">
    <property type="term" value="F:pyridoxal phosphate binding"/>
    <property type="evidence" value="ECO:0007669"/>
    <property type="project" value="InterPro"/>
</dbReference>
<dbReference type="GO" id="GO:0009102">
    <property type="term" value="P:biotin biosynthetic process"/>
    <property type="evidence" value="ECO:0007669"/>
    <property type="project" value="UniProtKB-UniPathway"/>
</dbReference>
<dbReference type="FunFam" id="3.40.640.10:FF:000130">
    <property type="entry name" value="8-amino-7-oxononanoate synthase"/>
    <property type="match status" value="1"/>
</dbReference>
<dbReference type="Gene3D" id="3.90.1150.10">
    <property type="entry name" value="Aspartate Aminotransferase, domain 1"/>
    <property type="match status" value="1"/>
</dbReference>
<dbReference type="Gene3D" id="3.40.640.10">
    <property type="entry name" value="Type I PLP-dependent aspartate aminotransferase-like (Major domain)"/>
    <property type="match status" value="1"/>
</dbReference>
<dbReference type="InterPro" id="IPR001917">
    <property type="entry name" value="Aminotrans_II_pyridoxalP_BS"/>
</dbReference>
<dbReference type="InterPro" id="IPR004839">
    <property type="entry name" value="Aminotransferase_I/II_large"/>
</dbReference>
<dbReference type="InterPro" id="IPR050087">
    <property type="entry name" value="AON_synthase_class-II"/>
</dbReference>
<dbReference type="InterPro" id="IPR015424">
    <property type="entry name" value="PyrdxlP-dep_Trfase"/>
</dbReference>
<dbReference type="InterPro" id="IPR015421">
    <property type="entry name" value="PyrdxlP-dep_Trfase_major"/>
</dbReference>
<dbReference type="InterPro" id="IPR015422">
    <property type="entry name" value="PyrdxlP-dep_Trfase_small"/>
</dbReference>
<dbReference type="PANTHER" id="PTHR13693:SF100">
    <property type="entry name" value="8-AMINO-7-OXONONANOATE SYNTHASE"/>
    <property type="match status" value="1"/>
</dbReference>
<dbReference type="PANTHER" id="PTHR13693">
    <property type="entry name" value="CLASS II AMINOTRANSFERASE/8-AMINO-7-OXONONANOATE SYNTHASE"/>
    <property type="match status" value="1"/>
</dbReference>
<dbReference type="Pfam" id="PF00155">
    <property type="entry name" value="Aminotran_1_2"/>
    <property type="match status" value="1"/>
</dbReference>
<dbReference type="SUPFAM" id="SSF53383">
    <property type="entry name" value="PLP-dependent transferases"/>
    <property type="match status" value="1"/>
</dbReference>
<dbReference type="PROSITE" id="PS00599">
    <property type="entry name" value="AA_TRANSFER_CLASS_2"/>
    <property type="match status" value="1"/>
</dbReference>
<sequence length="386" mass="40028">MKAATQARIDDSPLAWLDAVQRQRHEAGLRRCLRPRPAVATELDLASNDYLGLSRHPAVIDGGVQALRIWGAGATGSRLVTGDTKLHQQFEAELAEFVGAAAGLLFSSGYTANLGAVVGLSGPGSLLVSDARSHASLVDACRLSRARVVVTPHRDVDAVDAALRSRDEQRAVVVTDSVFSADGSLAPVRELLEVCRRHGALLLVDEAHGLGVRGGGRGLLYELGLAGAPDVVMTTTLSKALGSQGGVVLGPTPVRAHLIDAARPFIFDTGLAPAAVGAARAALRVLQAEPWRPQAVLNHAGELARMCGVAAVPDSAMVSVILGEPESAVAAAAACLDAGVKVGCFRPPTVPAGTSRLRLTARASLNAGELELARRVLTDVLAVARR</sequence>
<keyword id="KW-0012">Acyltransferase</keyword>
<keyword id="KW-0093">Biotin biosynthesis</keyword>
<keyword id="KW-0663">Pyridoxal phosphate</keyword>
<keyword id="KW-1185">Reference proteome</keyword>
<keyword id="KW-0808">Transferase</keyword>
<gene>
    <name type="primary">bioF1</name>
    <name type="ordered locus">MT1620</name>
</gene>
<accession>P9WQ86</accession>
<accession>L0TA03</accession>
<accession>O06621</accession>
<accession>P0A4X4</accession>
<proteinExistence type="inferred from homology"/>
<comment type="function">
    <text evidence="1">Catalyzes the decarboxylative condensation of pimeloyl-[acyl-carrier protein] and L-alanine to produce 8-amino-7-oxononanoate (AON), [acyl-carrier protein], and carbon dioxide.</text>
</comment>
<comment type="catalytic activity">
    <reaction>
        <text>6-carboxyhexanoyl-[ACP] + L-alanine + H(+) = (8S)-8-amino-7-oxononanoate + holo-[ACP] + CO2</text>
        <dbReference type="Rhea" id="RHEA:42288"/>
        <dbReference type="Rhea" id="RHEA-COMP:9685"/>
        <dbReference type="Rhea" id="RHEA-COMP:9955"/>
        <dbReference type="ChEBI" id="CHEBI:15378"/>
        <dbReference type="ChEBI" id="CHEBI:16526"/>
        <dbReference type="ChEBI" id="CHEBI:57972"/>
        <dbReference type="ChEBI" id="CHEBI:64479"/>
        <dbReference type="ChEBI" id="CHEBI:78846"/>
        <dbReference type="ChEBI" id="CHEBI:149468"/>
        <dbReference type="EC" id="2.3.1.47"/>
    </reaction>
</comment>
<comment type="cofactor">
    <cofactor evidence="1">
        <name>pyridoxal 5'-phosphate</name>
        <dbReference type="ChEBI" id="CHEBI:597326"/>
    </cofactor>
</comment>
<comment type="pathway">
    <text>Cofactor biosynthesis; biotin biosynthesis.</text>
</comment>
<comment type="subunit">
    <text evidence="1">Homodimer.</text>
</comment>
<comment type="similarity">
    <text evidence="2">Belongs to the class-II pyridoxal-phosphate-dependent aminotransferase family. BioF subfamily.</text>
</comment>
<feature type="chain" id="PRO_0000426819" description="8-amino-7-oxononanoate synthase 1">
    <location>
        <begin position="1"/>
        <end position="386"/>
    </location>
</feature>
<feature type="binding site" evidence="1">
    <location>
        <position position="31"/>
    </location>
    <ligand>
        <name>substrate</name>
    </ligand>
</feature>
<feature type="binding site" evidence="1">
    <location>
        <begin position="109"/>
        <end position="110"/>
    </location>
    <ligand>
        <name>pyridoxal 5'-phosphate</name>
        <dbReference type="ChEBI" id="CHEBI:597326"/>
    </ligand>
</feature>
<feature type="binding site" evidence="1">
    <location>
        <position position="134"/>
    </location>
    <ligand>
        <name>substrate</name>
    </ligand>
</feature>
<feature type="binding site" evidence="1">
    <location>
        <position position="180"/>
    </location>
    <ligand>
        <name>pyridoxal 5'-phosphate</name>
        <dbReference type="ChEBI" id="CHEBI:597326"/>
    </ligand>
</feature>
<feature type="binding site" evidence="1">
    <location>
        <begin position="205"/>
        <end position="208"/>
    </location>
    <ligand>
        <name>pyridoxal 5'-phosphate</name>
        <dbReference type="ChEBI" id="CHEBI:597326"/>
    </ligand>
</feature>
<feature type="binding site" evidence="1">
    <location>
        <begin position="236"/>
        <end position="239"/>
    </location>
    <ligand>
        <name>pyridoxal 5'-phosphate</name>
        <dbReference type="ChEBI" id="CHEBI:597326"/>
    </ligand>
</feature>
<feature type="binding site" evidence="1">
    <location>
        <position position="349"/>
    </location>
    <ligand>
        <name>substrate</name>
    </ligand>
</feature>
<feature type="modified residue" description="N6-(pyridoxal phosphate)lysine" evidence="1">
    <location>
        <position position="239"/>
    </location>
</feature>
<reference key="1">
    <citation type="journal article" date="2002" name="J. Bacteriol.">
        <title>Whole-genome comparison of Mycobacterium tuberculosis clinical and laboratory strains.</title>
        <authorList>
            <person name="Fleischmann R.D."/>
            <person name="Alland D."/>
            <person name="Eisen J.A."/>
            <person name="Carpenter L."/>
            <person name="White O."/>
            <person name="Peterson J.D."/>
            <person name="DeBoy R.T."/>
            <person name="Dodson R.J."/>
            <person name="Gwinn M.L."/>
            <person name="Haft D.H."/>
            <person name="Hickey E.K."/>
            <person name="Kolonay J.F."/>
            <person name="Nelson W.C."/>
            <person name="Umayam L.A."/>
            <person name="Ermolaeva M.D."/>
            <person name="Salzberg S.L."/>
            <person name="Delcher A."/>
            <person name="Utterback T.R."/>
            <person name="Weidman J.F."/>
            <person name="Khouri H.M."/>
            <person name="Gill J."/>
            <person name="Mikula A."/>
            <person name="Bishai W."/>
            <person name="Jacobs W.R. Jr."/>
            <person name="Venter J.C."/>
            <person name="Fraser C.M."/>
        </authorList>
    </citation>
    <scope>NUCLEOTIDE SEQUENCE [LARGE SCALE GENOMIC DNA]</scope>
    <source>
        <strain>CDC 1551 / Oshkosh</strain>
    </source>
</reference>